<protein>
    <recommendedName>
        <fullName>Uncharacterized protein ycf81</fullName>
        <shortName>RF81</shortName>
    </recommendedName>
</protein>
<gene>
    <name type="primary">ycf81</name>
</gene>
<keyword id="KW-0150">Chloroplast</keyword>
<keyword id="KW-0934">Plastid</keyword>
<geneLocation type="chloroplast"/>
<organism>
    <name type="scientific">Nephroselmis olivacea</name>
    <name type="common">Green alga</name>
    <dbReference type="NCBI Taxonomy" id="31312"/>
    <lineage>
        <taxon>Eukaryota</taxon>
        <taxon>Viridiplantae</taxon>
        <taxon>Chlorophyta</taxon>
        <taxon>Nephroselmidophyceae</taxon>
        <taxon>Nephroselmidales</taxon>
        <taxon>Nephroselmidaceae</taxon>
        <taxon>Nephroselmis</taxon>
    </lineage>
</organism>
<accession>Q9TKX7</accession>
<comment type="subcellular location">
    <subcellularLocation>
        <location>Plastid</location>
        <location>Chloroplast</location>
    </subcellularLocation>
</comment>
<comment type="similarity">
    <text evidence="1">Belongs to the ycf81 family.</text>
</comment>
<sequence>MQVTVQKPTGEALVTQIKQLAISSKARQIHFLGKRRSTQFYLASESNLVLRDYVTSMLLLPAWKQALQSAYQPGDLLELRILRSGKLPYQGQSHLEDGSLVFVTQAAPYIGQTVRVQVAHVLYSVTGFVMFANLVSSD</sequence>
<dbReference type="EMBL" id="AF137379">
    <property type="protein sequence ID" value="AAD54839.1"/>
    <property type="molecule type" value="Genomic_DNA"/>
</dbReference>
<dbReference type="RefSeq" id="NP_050868.1">
    <property type="nucleotide sequence ID" value="NC_000927.1"/>
</dbReference>
<dbReference type="GeneID" id="802031"/>
<dbReference type="GO" id="GO:0009507">
    <property type="term" value="C:chloroplast"/>
    <property type="evidence" value="ECO:0007669"/>
    <property type="project" value="UniProtKB-SubCell"/>
</dbReference>
<evidence type="ECO:0000305" key="1"/>
<name>YCF81_NEPOL</name>
<reference key="1">
    <citation type="journal article" date="1999" name="Proc. Natl. Acad. Sci. U.S.A.">
        <title>The complete chloroplast DNA sequence of the green alga Nephroselmis olivacea: insights into the architecture of ancestral chloroplast genomes.</title>
        <authorList>
            <person name="Turmel M."/>
            <person name="Otis C."/>
            <person name="Lemieux C."/>
        </authorList>
    </citation>
    <scope>NUCLEOTIDE SEQUENCE [LARGE SCALE GENOMIC DNA]</scope>
    <source>
        <strain>NIES-484 / S-N-5-8</strain>
    </source>
</reference>
<feature type="chain" id="PRO_0000217409" description="Uncharacterized protein ycf81">
    <location>
        <begin position="1"/>
        <end position="138"/>
    </location>
</feature>
<proteinExistence type="inferred from homology"/>